<sequence>MAAWKSWAALRLCATVVLLDMVVCKGFVEDLDESFKENRNDDIWLVDFYAPWCGHCKKLEPIWNEVGLEMKSIGSPVKVGKMDATSYSSIASEFGVRGYPTIKLLKGDLAYNHRGPRTKDDIIEFAHRVSGALIRPLPSQQMFEHMQKRHRVFFVYIGGESPLKEKYIDAASELIVYTYFFSASEEVVPEYVTLKEMPAVLVFKDETYFVYDEYEDGDLSSWINRERFQNYLAMDGFLLYELGDTGKLVALAVIDEKNTSVEHTRLKSIIQEVARDYRDLFHRDFQFGHMDGNDYINTLLMDELTVPTVVVLNTSNQQYFLLDRQIKNVEDMVQFINNILDGTVEAQGGDSILQRLKRIVFDAKSTIVSIFKSSPLMGCFLFGLPLGVISIMCYGIYTADTDGGYIEERYEVSKSENENQEQIEESKEQQEPSSGGSVVPTVQEPKDVLEKKKD</sequence>
<keyword id="KW-1015">Disulfide bond</keyword>
<keyword id="KW-0256">Endoplasmic reticulum</keyword>
<keyword id="KW-0325">Glycoprotein</keyword>
<keyword id="KW-0413">Isomerase</keyword>
<keyword id="KW-0472">Membrane</keyword>
<keyword id="KW-0676">Redox-active center</keyword>
<keyword id="KW-1185">Reference proteome</keyword>
<keyword id="KW-0732">Signal</keyword>
<keyword id="KW-0812">Transmembrane</keyword>
<keyword id="KW-1133">Transmembrane helix</keyword>
<dbReference type="EC" id="5.3.4.1" evidence="1"/>
<dbReference type="EMBL" id="CR859879">
    <property type="protein sequence ID" value="CAH92035.1"/>
    <property type="molecule type" value="mRNA"/>
</dbReference>
<dbReference type="RefSeq" id="NP_001126183.1">
    <property type="nucleotide sequence ID" value="NM_001132711.1"/>
</dbReference>
<dbReference type="SMR" id="Q5R875"/>
<dbReference type="FunCoup" id="Q5R875">
    <property type="interactions" value="3192"/>
</dbReference>
<dbReference type="STRING" id="9601.ENSPPYP00000010356"/>
<dbReference type="GlyCosmos" id="Q5R875">
    <property type="glycosylation" value="2 sites, No reported glycans"/>
</dbReference>
<dbReference type="GeneID" id="100173147"/>
<dbReference type="KEGG" id="pon:100173147"/>
<dbReference type="CTD" id="54495"/>
<dbReference type="eggNOG" id="KOG4277">
    <property type="taxonomic scope" value="Eukaryota"/>
</dbReference>
<dbReference type="InParanoid" id="Q5R875"/>
<dbReference type="OrthoDB" id="74910at2759"/>
<dbReference type="Proteomes" id="UP000001595">
    <property type="component" value="Unplaced"/>
</dbReference>
<dbReference type="GO" id="GO:0009986">
    <property type="term" value="C:cell surface"/>
    <property type="evidence" value="ECO:0007669"/>
    <property type="project" value="TreeGrafter"/>
</dbReference>
<dbReference type="GO" id="GO:0005789">
    <property type="term" value="C:endoplasmic reticulum membrane"/>
    <property type="evidence" value="ECO:0007669"/>
    <property type="project" value="UniProtKB-SubCell"/>
</dbReference>
<dbReference type="GO" id="GO:0003756">
    <property type="term" value="F:protein disulfide isomerase activity"/>
    <property type="evidence" value="ECO:0007669"/>
    <property type="project" value="UniProtKB-EC"/>
</dbReference>
<dbReference type="CDD" id="cd03000">
    <property type="entry name" value="PDI_a_TMX3"/>
    <property type="match status" value="1"/>
</dbReference>
<dbReference type="FunFam" id="3.40.30.10:FF:000115">
    <property type="entry name" value="protein disulfide-isomerase TMX3 isoform X1"/>
    <property type="match status" value="1"/>
</dbReference>
<dbReference type="FunFam" id="3.40.30.10:FF:000121">
    <property type="entry name" value="protein disulfide-isomerase TMX3 isoform X1"/>
    <property type="match status" value="1"/>
</dbReference>
<dbReference type="Gene3D" id="3.40.30.10">
    <property type="entry name" value="Glutaredoxin"/>
    <property type="match status" value="2"/>
</dbReference>
<dbReference type="InterPro" id="IPR052250">
    <property type="entry name" value="PDI_TMX3"/>
</dbReference>
<dbReference type="InterPro" id="IPR036249">
    <property type="entry name" value="Thioredoxin-like_sf"/>
</dbReference>
<dbReference type="InterPro" id="IPR017937">
    <property type="entry name" value="Thioredoxin_CS"/>
</dbReference>
<dbReference type="InterPro" id="IPR013766">
    <property type="entry name" value="Thioredoxin_domain"/>
</dbReference>
<dbReference type="PANTHER" id="PTHR46426">
    <property type="entry name" value="PROTEIN DISULFIDE-ISOMERASE TMX3"/>
    <property type="match status" value="1"/>
</dbReference>
<dbReference type="PANTHER" id="PTHR46426:SF1">
    <property type="entry name" value="PROTEIN DISULFIDE-ISOMERASE TMX3"/>
    <property type="match status" value="1"/>
</dbReference>
<dbReference type="Pfam" id="PF00085">
    <property type="entry name" value="Thioredoxin"/>
    <property type="match status" value="1"/>
</dbReference>
<dbReference type="Pfam" id="PF13848">
    <property type="entry name" value="Thioredoxin_6"/>
    <property type="match status" value="1"/>
</dbReference>
<dbReference type="PRINTS" id="PR00421">
    <property type="entry name" value="THIOREDOXIN"/>
</dbReference>
<dbReference type="SUPFAM" id="SSF52833">
    <property type="entry name" value="Thioredoxin-like"/>
    <property type="match status" value="2"/>
</dbReference>
<dbReference type="PROSITE" id="PS00194">
    <property type="entry name" value="THIOREDOXIN_1"/>
    <property type="match status" value="1"/>
</dbReference>
<dbReference type="PROSITE" id="PS51352">
    <property type="entry name" value="THIOREDOXIN_2"/>
    <property type="match status" value="1"/>
</dbReference>
<gene>
    <name type="primary">TMX3</name>
    <name type="synonym">TXNDC10</name>
</gene>
<comment type="function">
    <text evidence="1">Probable disulfide isomerase, which participates in the folding of proteins containing disulfide bonds. May act as a dithiol oxidase. Acts as a regulator of endoplasmic reticulum-mitochondria contact sites via its ability to regulate redox signals.</text>
</comment>
<comment type="catalytic activity">
    <reaction evidence="1">
        <text>Catalyzes the rearrangement of -S-S- bonds in proteins.</text>
        <dbReference type="EC" id="5.3.4.1"/>
    </reaction>
</comment>
<comment type="subcellular location">
    <subcellularLocation>
        <location evidence="1">Endoplasmic reticulum membrane</location>
        <topology evidence="1">Single-pass membrane protein</topology>
    </subcellularLocation>
</comment>
<comment type="domain">
    <text evidence="3">The di-lysine motif confers endoplasmic reticulum localization for type I membrane proteins.</text>
</comment>
<comment type="similarity">
    <text evidence="7">Belongs to the protein disulfide isomerase family.</text>
</comment>
<feature type="signal peptide" evidence="4">
    <location>
        <begin position="1"/>
        <end position="24"/>
    </location>
</feature>
<feature type="chain" id="PRO_0000034187" description="Protein disulfide-isomerase TMX3">
    <location>
        <begin position="25"/>
        <end position="454"/>
    </location>
</feature>
<feature type="topological domain" description="Lumenal" evidence="4">
    <location>
        <begin position="25"/>
        <end position="375"/>
    </location>
</feature>
<feature type="transmembrane region" description="Helical" evidence="4">
    <location>
        <begin position="376"/>
        <end position="396"/>
    </location>
</feature>
<feature type="topological domain" description="Cytoplasmic" evidence="4">
    <location>
        <begin position="397"/>
        <end position="454"/>
    </location>
</feature>
<feature type="domain" description="Thioredoxin" evidence="5">
    <location>
        <begin position="25"/>
        <end position="128"/>
    </location>
</feature>
<feature type="region of interest" description="Disordered" evidence="6">
    <location>
        <begin position="412"/>
        <end position="454"/>
    </location>
</feature>
<feature type="short sequence motif" description="Di-lysine motif" evidence="4">
    <location>
        <begin position="451"/>
        <end position="454"/>
    </location>
</feature>
<feature type="compositionally biased region" description="Basic and acidic residues" evidence="6">
    <location>
        <begin position="444"/>
        <end position="454"/>
    </location>
</feature>
<feature type="active site" description="Nucleophile" evidence="2">
    <location>
        <position position="53"/>
    </location>
</feature>
<feature type="active site" description="Nucleophile" evidence="2">
    <location>
        <position position="56"/>
    </location>
</feature>
<feature type="glycosylation site" description="N-linked (GlcNAc...) asparagine" evidence="4">
    <location>
        <position position="258"/>
    </location>
</feature>
<feature type="glycosylation site" description="N-linked (GlcNAc...) asparagine" evidence="4">
    <location>
        <position position="313"/>
    </location>
</feature>
<feature type="disulfide bond" description="Redox-active" evidence="5">
    <location>
        <begin position="53"/>
        <end position="56"/>
    </location>
</feature>
<proteinExistence type="evidence at transcript level"/>
<organism>
    <name type="scientific">Pongo abelii</name>
    <name type="common">Sumatran orangutan</name>
    <name type="synonym">Pongo pygmaeus abelii</name>
    <dbReference type="NCBI Taxonomy" id="9601"/>
    <lineage>
        <taxon>Eukaryota</taxon>
        <taxon>Metazoa</taxon>
        <taxon>Chordata</taxon>
        <taxon>Craniata</taxon>
        <taxon>Vertebrata</taxon>
        <taxon>Euteleostomi</taxon>
        <taxon>Mammalia</taxon>
        <taxon>Eutheria</taxon>
        <taxon>Euarchontoglires</taxon>
        <taxon>Primates</taxon>
        <taxon>Haplorrhini</taxon>
        <taxon>Catarrhini</taxon>
        <taxon>Hominidae</taxon>
        <taxon>Pongo</taxon>
    </lineage>
</organism>
<protein>
    <recommendedName>
        <fullName>Protein disulfide-isomerase TMX3</fullName>
        <ecNumber evidence="1">5.3.4.1</ecNumber>
    </recommendedName>
    <alternativeName>
        <fullName>Thioredoxin domain-containing protein 10</fullName>
    </alternativeName>
    <alternativeName>
        <fullName>Thioredoxin-related transmembrane protein 3</fullName>
    </alternativeName>
</protein>
<evidence type="ECO:0000250" key="1">
    <source>
        <dbReference type="UniProtKB" id="Q96JJ7"/>
    </source>
</evidence>
<evidence type="ECO:0000250" key="2">
    <source>
        <dbReference type="UniProtKB" id="Q9H3N1"/>
    </source>
</evidence>
<evidence type="ECO:0000250" key="3">
    <source>
        <dbReference type="UniProtKB" id="Q9Y320"/>
    </source>
</evidence>
<evidence type="ECO:0000255" key="4"/>
<evidence type="ECO:0000255" key="5">
    <source>
        <dbReference type="PROSITE-ProRule" id="PRU00691"/>
    </source>
</evidence>
<evidence type="ECO:0000256" key="6">
    <source>
        <dbReference type="SAM" id="MobiDB-lite"/>
    </source>
</evidence>
<evidence type="ECO:0000305" key="7"/>
<name>TMX3_PONAB</name>
<accession>Q5R875</accession>
<reference key="1">
    <citation type="submission" date="2004-11" db="EMBL/GenBank/DDBJ databases">
        <authorList>
            <consortium name="The German cDNA consortium"/>
        </authorList>
    </citation>
    <scope>NUCLEOTIDE SEQUENCE [LARGE SCALE MRNA]</scope>
    <source>
        <tissue>Kidney</tissue>
    </source>
</reference>